<organism>
    <name type="scientific">Eremothecium gossypii (strain ATCC 10895 / CBS 109.51 / FGSC 9923 / NRRL Y-1056)</name>
    <name type="common">Yeast</name>
    <name type="synonym">Ashbya gossypii</name>
    <dbReference type="NCBI Taxonomy" id="284811"/>
    <lineage>
        <taxon>Eukaryota</taxon>
        <taxon>Fungi</taxon>
        <taxon>Dikarya</taxon>
        <taxon>Ascomycota</taxon>
        <taxon>Saccharomycotina</taxon>
        <taxon>Saccharomycetes</taxon>
        <taxon>Saccharomycetales</taxon>
        <taxon>Saccharomycetaceae</taxon>
        <taxon>Eremothecium</taxon>
    </lineage>
</organism>
<evidence type="ECO:0000250" key="1"/>
<evidence type="ECO:0000255" key="2"/>
<evidence type="ECO:0000305" key="3"/>
<keyword id="KW-0256">Endoplasmic reticulum</keyword>
<keyword id="KW-0325">Glycoprotein</keyword>
<keyword id="KW-0337">GPI-anchor biosynthesis</keyword>
<keyword id="KW-0472">Membrane</keyword>
<keyword id="KW-1185">Reference proteome</keyword>
<keyword id="KW-0812">Transmembrane</keyword>
<keyword id="KW-1133">Transmembrane helix</keyword>
<dbReference type="EMBL" id="AE016819">
    <property type="protein sequence ID" value="AAS54105.2"/>
    <property type="status" value="ALT_INIT"/>
    <property type="molecule type" value="Genomic_DNA"/>
</dbReference>
<dbReference type="RefSeq" id="NP_986281.2">
    <property type="nucleotide sequence ID" value="NM_212417.2"/>
</dbReference>
<dbReference type="SMR" id="Q751U2"/>
<dbReference type="FunCoup" id="Q751U2">
    <property type="interactions" value="49"/>
</dbReference>
<dbReference type="STRING" id="284811.Q751U2"/>
<dbReference type="GlyCosmos" id="Q751U2">
    <property type="glycosylation" value="1 site, No reported glycans"/>
</dbReference>
<dbReference type="GeneID" id="4622572"/>
<dbReference type="KEGG" id="ago:AGOS_AFR733W"/>
<dbReference type="eggNOG" id="ENOG502QS8N">
    <property type="taxonomic scope" value="Eukaryota"/>
</dbReference>
<dbReference type="InParanoid" id="Q751U2"/>
<dbReference type="OrthoDB" id="5546453at2759"/>
<dbReference type="UniPathway" id="UPA00196"/>
<dbReference type="Proteomes" id="UP000000591">
    <property type="component" value="Chromosome VI"/>
</dbReference>
<dbReference type="GO" id="GO:0005789">
    <property type="term" value="C:endoplasmic reticulum membrane"/>
    <property type="evidence" value="ECO:0007669"/>
    <property type="project" value="UniProtKB-SubCell"/>
</dbReference>
<dbReference type="GO" id="GO:1990529">
    <property type="term" value="C:glycosylphosphatidylinositol-mannosyltransferase I complex"/>
    <property type="evidence" value="ECO:0000318"/>
    <property type="project" value="GO_Central"/>
</dbReference>
<dbReference type="GO" id="GO:0006506">
    <property type="term" value="P:GPI anchor biosynthetic process"/>
    <property type="evidence" value="ECO:0000318"/>
    <property type="project" value="GO_Central"/>
</dbReference>
<dbReference type="InterPro" id="IPR042322">
    <property type="entry name" value="Pbn1"/>
</dbReference>
<dbReference type="InterPro" id="IPR013233">
    <property type="entry name" value="PIG-X/PBN1"/>
</dbReference>
<dbReference type="PANTHER" id="PTHR28533">
    <property type="entry name" value="PROTEIN PBN1"/>
    <property type="match status" value="1"/>
</dbReference>
<dbReference type="PANTHER" id="PTHR28533:SF1">
    <property type="entry name" value="PROTEIN PBN1"/>
    <property type="match status" value="1"/>
</dbReference>
<dbReference type="Pfam" id="PF08320">
    <property type="entry name" value="PIG-X"/>
    <property type="match status" value="1"/>
</dbReference>
<dbReference type="SMART" id="SM00780">
    <property type="entry name" value="PIG-X"/>
    <property type="match status" value="1"/>
</dbReference>
<feature type="chain" id="PRO_0000246298" description="Protein PBN1">
    <location>
        <begin position="1"/>
        <end position="413"/>
    </location>
</feature>
<feature type="topological domain" description="Lumenal" evidence="2">
    <location>
        <begin position="1"/>
        <end position="378"/>
    </location>
</feature>
<feature type="transmembrane region" description="Helical" evidence="2">
    <location>
        <begin position="379"/>
        <end position="401"/>
    </location>
</feature>
<feature type="topological domain" description="Cytoplasmic" evidence="2">
    <location>
        <begin position="402"/>
        <end position="413"/>
    </location>
</feature>
<feature type="glycosylation site" description="N-linked (GlcNAc...) asparagine" evidence="2">
    <location>
        <position position="362"/>
    </location>
</feature>
<gene>
    <name type="primary">PBN1</name>
    <name type="ordered locus">AFR733W</name>
</gene>
<comment type="function">
    <text evidence="1">Required for proper folding and/or the stability of a subset of proteins in the endoplasmic reticulum. Component of glycosylphosphatidylinositol-mannosyltransferase 1 which transfers the first of the 4 mannoses in the GPI-anchor precursors during GPI-anchor biosynthesis. Probably acts by stabilizing the mannosyltransferase GPI14 (By similarity).</text>
</comment>
<comment type="pathway">
    <text>Glycolipid biosynthesis; glycosylphosphatidylinositol-anchor biosynthesis.</text>
</comment>
<comment type="subcellular location">
    <subcellularLocation>
        <location evidence="1">Endoplasmic reticulum membrane</location>
        <topology evidence="1">Single-pass type III membrane protein</topology>
    </subcellularLocation>
</comment>
<comment type="similarity">
    <text evidence="3">Belongs to the PIGX family.</text>
</comment>
<comment type="sequence caution" evidence="3">
    <conflict type="erroneous initiation">
        <sequence resource="EMBL-CDS" id="AAS54105"/>
    </conflict>
    <text>Extended N-terminus.</text>
</comment>
<proteinExistence type="inferred from homology"/>
<sequence>MQSVRQTVLFESEEAWRAGAEQNATAITVHARGGEVVQTRRTWAAAGGPRVRVTWSGGRTVSEVSPQLAAGLSVYVEGGAHVSRDFVQARGQAVFHSAQLELDAVRAWWPRELAVQPEALRWAECAYDIELGRQVRVDEYCALRAGETVALTAAAGGTDEAKVETGVFYPEISDGADVSLSGFRCTWLRDGSGRTDTCQKTLLMYKPAHVHMPEPAVGIELVQPVTLHPVIEVDLSSVSASGPACAHHVFLQLPAQLFVDKFQQPPELLFGEDDLELPEYKVEAWGSEVIYALEPGRVNRVQLHSRYARPGPGRRYEVVPLRPYVFEACDTGSADIAENPFYSKGMGFEAYFTADTVFKHRNSTRLNIPVPRGNSNDFPSIQYVTVLSILFSVLYISYCLFRRPVAASARASG</sequence>
<reference key="1">
    <citation type="journal article" date="2004" name="Science">
        <title>The Ashbya gossypii genome as a tool for mapping the ancient Saccharomyces cerevisiae genome.</title>
        <authorList>
            <person name="Dietrich F.S."/>
            <person name="Voegeli S."/>
            <person name="Brachat S."/>
            <person name="Lerch A."/>
            <person name="Gates K."/>
            <person name="Steiner S."/>
            <person name="Mohr C."/>
            <person name="Poehlmann R."/>
            <person name="Luedi P."/>
            <person name="Choi S."/>
            <person name="Wing R.A."/>
            <person name="Flavier A."/>
            <person name="Gaffney T.D."/>
            <person name="Philippsen P."/>
        </authorList>
    </citation>
    <scope>NUCLEOTIDE SEQUENCE [LARGE SCALE GENOMIC DNA]</scope>
    <source>
        <strain>ATCC 10895 / CBS 109.51 / FGSC 9923 / NRRL Y-1056</strain>
    </source>
</reference>
<reference key="2">
    <citation type="journal article" date="2013" name="G3 (Bethesda)">
        <title>Genomes of Ashbya fungi isolated from insects reveal four mating-type loci, numerous translocations, lack of transposons, and distinct gene duplications.</title>
        <authorList>
            <person name="Dietrich F.S."/>
            <person name="Voegeli S."/>
            <person name="Kuo S."/>
            <person name="Philippsen P."/>
        </authorList>
    </citation>
    <scope>GENOME REANNOTATION</scope>
    <scope>SEQUENCE REVISION TO 23-24</scope>
    <source>
        <strain>ATCC 10895 / CBS 109.51 / FGSC 9923 / NRRL Y-1056</strain>
    </source>
</reference>
<name>PBN1_EREGS</name>
<protein>
    <recommendedName>
        <fullName>Protein PBN1</fullName>
    </recommendedName>
</protein>
<accession>Q751U2</accession>